<proteinExistence type="inferred from homology"/>
<keyword id="KW-0249">Electron transport</keyword>
<keyword id="KW-0274">FAD</keyword>
<keyword id="KW-0285">Flavoprotein</keyword>
<keyword id="KW-0325">Glycoprotein</keyword>
<keyword id="KW-0406">Ion transport</keyword>
<keyword id="KW-0408">Iron</keyword>
<keyword id="KW-0410">Iron transport</keyword>
<keyword id="KW-0472">Membrane</keyword>
<keyword id="KW-0520">NAD</keyword>
<keyword id="KW-0560">Oxidoreductase</keyword>
<keyword id="KW-0812">Transmembrane</keyword>
<keyword id="KW-1133">Transmembrane helix</keyword>
<keyword id="KW-0813">Transport</keyword>
<comment type="catalytic activity">
    <reaction>
        <text>2 a Fe(II)-siderophore + NAD(+) + H(+) = 2 a Fe(III)-siderophore + NADH</text>
        <dbReference type="Rhea" id="RHEA:15061"/>
        <dbReference type="Rhea" id="RHEA-COMP:11342"/>
        <dbReference type="Rhea" id="RHEA-COMP:11344"/>
        <dbReference type="ChEBI" id="CHEBI:15378"/>
        <dbReference type="ChEBI" id="CHEBI:29033"/>
        <dbReference type="ChEBI" id="CHEBI:29034"/>
        <dbReference type="ChEBI" id="CHEBI:57540"/>
        <dbReference type="ChEBI" id="CHEBI:57945"/>
        <dbReference type="EC" id="1.16.1.7"/>
    </reaction>
</comment>
<comment type="cofactor">
    <cofactor evidence="4">
        <name>FAD</name>
        <dbReference type="ChEBI" id="CHEBI:57692"/>
    </cofactor>
</comment>
<comment type="subcellular location">
    <subcellularLocation>
        <location evidence="4">Membrane</location>
        <topology evidence="4">Multi-pass membrane protein</topology>
    </subcellularLocation>
</comment>
<comment type="similarity">
    <text evidence="4">Belongs to the ferric reductase (FRE) family.</text>
</comment>
<accession>P78588</accession>
<gene>
    <name type="primary">CFL1</name>
</gene>
<sequence>MTESKFHAKYDKIQAEFKTNGTEYAKMTTKSSSGSKTSTSASKSSKSTGSSNASKSSTNAHGSNSSTSSTSSSSSKSGKGNSGTSTTETITTPLLIDYKKFTPYKDAYQMSNNNFNLSINYGSGLLGYWAGILAIAIFANMIKKMFPSLTNNLSGSISNLFRKHLFLPATFRKKKAQEFSIGVYGFFDGLIPTRLETIIVVIFVVLTGLFSALHIHHVKDNPQYATKNAELGHLIADRTGILGTFLIPLLILFGGRNNFLQWLTGWDFATFIMYHRWISRVDVLLIIVHAITFSVSDKATGKYKNRMKRDFMIWGTVSTICGGFILFQAMLFFRRKCYEVFFLIHIVLVVFFVVGGYYHLESQGYGDFMWAAIAVWAFDRVVRLGRIFFFGARKATVSIKGDDTLKIEVPKPKYWKSVAGGHAFIHFLKPTLFLQSHPFTFTTTESNDKIVLYAKIKNGITSNIAKYLSPLPGNTATIRVLVEGPYGEPSSAGRNCKNVVFVAGGNGIPGIYSECVDLAKKSKNQSIKLIWIIRHWKSLSWFTEELEYLKKTNVQSTIYVTQPQDCSGLECFEHDVSFEKKSDEKDSVESSQYSLISNIKQGLSHVEFIEGRPDISTQVEQEVKQADGAIGFVTCGHPAMVDELRFAVTQNLNVSKHRVEYHEQLQTWA</sequence>
<protein>
    <recommendedName>
        <fullName>Probable ferric reductase transmembrane component</fullName>
        <ecNumber>1.16.1.7</ecNumber>
    </recommendedName>
    <alternativeName>
        <fullName>Ferric-chelate reductase</fullName>
    </alternativeName>
</protein>
<feature type="chain" id="PRO_0000210151" description="Probable ferric reductase transmembrane component">
    <location>
        <begin position="1"/>
        <end position="669"/>
    </location>
</feature>
<feature type="transmembrane region" description="Helical" evidence="1">
    <location>
        <begin position="122"/>
        <end position="142"/>
    </location>
</feature>
<feature type="transmembrane region" description="Helical" evidence="1">
    <location>
        <begin position="198"/>
        <end position="218"/>
    </location>
</feature>
<feature type="transmembrane region" description="Helical" evidence="1">
    <location>
        <begin position="234"/>
        <end position="254"/>
    </location>
</feature>
<feature type="transmembrane region" description="Helical" evidence="1">
    <location>
        <begin position="281"/>
        <end position="301"/>
    </location>
</feature>
<feature type="transmembrane region" description="Helical" evidence="1">
    <location>
        <begin position="313"/>
        <end position="333"/>
    </location>
</feature>
<feature type="transmembrane region" description="Helical" evidence="1">
    <location>
        <begin position="340"/>
        <end position="360"/>
    </location>
</feature>
<feature type="transmembrane region" description="Helical" evidence="1">
    <location>
        <begin position="499"/>
        <end position="519"/>
    </location>
</feature>
<feature type="domain" description="Ferric oxidoreductase">
    <location>
        <begin position="239"/>
        <end position="373"/>
    </location>
</feature>
<feature type="domain" description="FAD-binding FR-type" evidence="2">
    <location>
        <begin position="374"/>
        <end position="492"/>
    </location>
</feature>
<feature type="region of interest" description="Disordered" evidence="3">
    <location>
        <begin position="17"/>
        <end position="86"/>
    </location>
</feature>
<feature type="compositionally biased region" description="Low complexity" evidence="3">
    <location>
        <begin position="28"/>
        <end position="86"/>
    </location>
</feature>
<feature type="binding site" evidence="1">
    <location>
        <begin position="437"/>
        <end position="442"/>
    </location>
    <ligand>
        <name>FAD</name>
        <dbReference type="ChEBI" id="CHEBI:57692"/>
    </ligand>
</feature>
<feature type="glycosylation site" description="N-linked (GlcNAc...) asparagine" evidence="1">
    <location>
        <position position="20"/>
    </location>
</feature>
<feature type="glycosylation site" description="N-linked (GlcNAc...) asparagine" evidence="1">
    <location>
        <position position="52"/>
    </location>
</feature>
<feature type="glycosylation site" description="N-linked (GlcNAc...) asparagine" evidence="1">
    <location>
        <position position="64"/>
    </location>
</feature>
<feature type="glycosylation site" description="N-linked (GlcNAc...) asparagine" evidence="1">
    <location>
        <position position="116"/>
    </location>
</feature>
<feature type="glycosylation site" description="N-linked (GlcNAc...) asparagine" evidence="1">
    <location>
        <position position="152"/>
    </location>
</feature>
<feature type="glycosylation site" description="N-linked (GlcNAc...) asparagine" evidence="1">
    <location>
        <position position="524"/>
    </location>
</feature>
<feature type="glycosylation site" description="N-linked (GlcNAc...) asparagine" evidence="1">
    <location>
        <position position="653"/>
    </location>
</feature>
<reference key="1">
    <citation type="journal article" date="1996" name="Microbiology">
        <title>Isolation of the mRNA-capping enzyme and ferric-reductase-related genes from Candida albicans.</title>
        <authorList>
            <person name="Yamada-Okabe T."/>
            <person name="Shimmi O."/>
            <person name="Doi R."/>
            <person name="Mizumoto K."/>
            <person name="Arisawa M."/>
            <person name="Yamada-Okabe H."/>
        </authorList>
    </citation>
    <scope>NUCLEOTIDE SEQUENCE [GENOMIC DNA]</scope>
    <source>
        <strain>ATCC 10259 / CBS 5796 / DSM 5817 / JCM 2078 / NBRC 1060 / 2024</strain>
    </source>
</reference>
<evidence type="ECO:0000255" key="1"/>
<evidence type="ECO:0000255" key="2">
    <source>
        <dbReference type="PROSITE-ProRule" id="PRU00716"/>
    </source>
</evidence>
<evidence type="ECO:0000256" key="3">
    <source>
        <dbReference type="SAM" id="MobiDB-lite"/>
    </source>
</evidence>
<evidence type="ECO:0000305" key="4"/>
<name>FREL_CANAX</name>
<organism>
    <name type="scientific">Candida albicans</name>
    <name type="common">Yeast</name>
    <dbReference type="NCBI Taxonomy" id="5476"/>
    <lineage>
        <taxon>Eukaryota</taxon>
        <taxon>Fungi</taxon>
        <taxon>Dikarya</taxon>
        <taxon>Ascomycota</taxon>
        <taxon>Saccharomycotina</taxon>
        <taxon>Pichiomycetes</taxon>
        <taxon>Debaryomycetaceae</taxon>
        <taxon>Candida/Lodderomyces clade</taxon>
        <taxon>Candida</taxon>
    </lineage>
</organism>
<dbReference type="EC" id="1.16.1.7"/>
<dbReference type="EMBL" id="D83181">
    <property type="protein sequence ID" value="BAA11834.1"/>
    <property type="molecule type" value="Genomic_DNA"/>
</dbReference>
<dbReference type="SMR" id="P78588"/>
<dbReference type="GlyCosmos" id="P78588">
    <property type="glycosylation" value="7 sites, No reported glycans"/>
</dbReference>
<dbReference type="VEuPathDB" id="FungiDB:C4_05770C_A"/>
<dbReference type="VEuPathDB" id="FungiDB:CAWG_03246"/>
<dbReference type="GO" id="GO:0005886">
    <property type="term" value="C:plasma membrane"/>
    <property type="evidence" value="ECO:0007669"/>
    <property type="project" value="TreeGrafter"/>
</dbReference>
<dbReference type="GO" id="GO:0140618">
    <property type="term" value="F:ferric-chelate reductase (NADH) activity"/>
    <property type="evidence" value="ECO:0007669"/>
    <property type="project" value="UniProtKB-EC"/>
</dbReference>
<dbReference type="GO" id="GO:0015677">
    <property type="term" value="P:copper ion import"/>
    <property type="evidence" value="ECO:0007669"/>
    <property type="project" value="TreeGrafter"/>
</dbReference>
<dbReference type="GO" id="GO:0006879">
    <property type="term" value="P:intracellular iron ion homeostasis"/>
    <property type="evidence" value="ECO:0007669"/>
    <property type="project" value="TreeGrafter"/>
</dbReference>
<dbReference type="GO" id="GO:0006826">
    <property type="term" value="P:iron ion transport"/>
    <property type="evidence" value="ECO:0007669"/>
    <property type="project" value="UniProtKB-KW"/>
</dbReference>
<dbReference type="CDD" id="cd06186">
    <property type="entry name" value="NOX_Duox_like_FAD_NADP"/>
    <property type="match status" value="1"/>
</dbReference>
<dbReference type="FunFam" id="3.40.50.80:FF:000046">
    <property type="entry name" value="Probable ferric reductase transmembrane component"/>
    <property type="match status" value="1"/>
</dbReference>
<dbReference type="Gene3D" id="3.40.50.80">
    <property type="entry name" value="Nucleotide-binding domain of ferredoxin-NADP reductase (FNR) module"/>
    <property type="match status" value="1"/>
</dbReference>
<dbReference type="InterPro" id="IPR013112">
    <property type="entry name" value="FAD-bd_8"/>
</dbReference>
<dbReference type="InterPro" id="IPR017927">
    <property type="entry name" value="FAD-bd_FR_type"/>
</dbReference>
<dbReference type="InterPro" id="IPR013130">
    <property type="entry name" value="Fe3_Rdtase_TM_dom"/>
</dbReference>
<dbReference type="InterPro" id="IPR013121">
    <property type="entry name" value="Fe_red_NAD-bd_6"/>
</dbReference>
<dbReference type="InterPro" id="IPR051410">
    <property type="entry name" value="Ferric/Cupric_Reductase"/>
</dbReference>
<dbReference type="InterPro" id="IPR039261">
    <property type="entry name" value="FNR_nucleotide-bd"/>
</dbReference>
<dbReference type="PANTHER" id="PTHR32361:SF9">
    <property type="entry name" value="FERRIC REDUCTASE TRANSMEMBRANE COMPONENT 3-RELATED"/>
    <property type="match status" value="1"/>
</dbReference>
<dbReference type="PANTHER" id="PTHR32361">
    <property type="entry name" value="FERRIC/CUPRIC REDUCTASE TRANSMEMBRANE COMPONENT"/>
    <property type="match status" value="1"/>
</dbReference>
<dbReference type="Pfam" id="PF08022">
    <property type="entry name" value="FAD_binding_8"/>
    <property type="match status" value="1"/>
</dbReference>
<dbReference type="Pfam" id="PF01794">
    <property type="entry name" value="Ferric_reduct"/>
    <property type="match status" value="1"/>
</dbReference>
<dbReference type="Pfam" id="PF08030">
    <property type="entry name" value="NAD_binding_6"/>
    <property type="match status" value="1"/>
</dbReference>
<dbReference type="SFLD" id="SFLDS00052">
    <property type="entry name" value="Ferric_Reductase_Domain"/>
    <property type="match status" value="1"/>
</dbReference>
<dbReference type="SFLD" id="SFLDG01168">
    <property type="entry name" value="Ferric_reductase_subgroup_(FRE"/>
    <property type="match status" value="1"/>
</dbReference>
<dbReference type="SUPFAM" id="SSF52343">
    <property type="entry name" value="Ferredoxin reductase-like, C-terminal NADP-linked domain"/>
    <property type="match status" value="1"/>
</dbReference>
<dbReference type="PROSITE" id="PS51384">
    <property type="entry name" value="FAD_FR"/>
    <property type="match status" value="1"/>
</dbReference>